<organism>
    <name type="scientific">Escherichia coli (strain SMS-3-5 / SECEC)</name>
    <dbReference type="NCBI Taxonomy" id="439855"/>
    <lineage>
        <taxon>Bacteria</taxon>
        <taxon>Pseudomonadati</taxon>
        <taxon>Pseudomonadota</taxon>
        <taxon>Gammaproteobacteria</taxon>
        <taxon>Enterobacterales</taxon>
        <taxon>Enterobacteriaceae</taxon>
        <taxon>Escherichia</taxon>
    </lineage>
</organism>
<sequence length="682" mass="72238">MSRKQLALFEPTLVVQALKEAVKKLNPQAQWRNPVMFIVWIGSLLTTFISIAMASGAMPGNALFSAAISAWLWVTVLFANFAEALAEGRSKAQANSLKGVKKTAFARKLREPKYGAAADKVPADQLRKGDIVLVEAGDIIPCDGEVIEGGASVDESAITGESAPVIRESGGDFASVTGGTRILSDWLVIECSVNPGETFLDRMIAMVEGAQRRKTPNEIALTILLIALTIVFLLATATLWPFSAWGGNAVSVTVLVALLVCLIPTTIGGLLSAIGVAGMSRMLGANVIATSGRAVEAAGDVDVLLLDKTGTITLGNRQASEFIPAQGVDEKTLADAAQLASLADETPEGRSIVILAKQRFNLRERDVQSLHATFVPFTAQSRMSGINIDNRMIRKGSVDAIRRHVEANGGHFPADVDQKVDQVARQGATPLVVVEGSRVLGVIALKDIVKGGIKERFAQLRKMGIKTVMITGDNRLTAAAIAAEAGVDDFLAEATPEAKLALIRQYQAEGRLVAMTGDGTNDAPALAQADVAVAMNSGTQAAKEAGNMVDLDSNPTKLIEVVHIGKQMLMTRGSLTTFSIANDVAKYFAIIPAAFAATYPQLNALNIMRLHSPDSAILSAVIFNALIIVFLIPLALKGASYKPLTASAMLRRNLWIYGLGGLLVPFIGIKVIDLLLTVCGLV</sequence>
<evidence type="ECO:0000255" key="1">
    <source>
        <dbReference type="HAMAP-Rule" id="MF_00285"/>
    </source>
</evidence>
<proteinExistence type="inferred from homology"/>
<keyword id="KW-0067">ATP-binding</keyword>
<keyword id="KW-0997">Cell inner membrane</keyword>
<keyword id="KW-1003">Cell membrane</keyword>
<keyword id="KW-0406">Ion transport</keyword>
<keyword id="KW-0460">Magnesium</keyword>
<keyword id="KW-0472">Membrane</keyword>
<keyword id="KW-0479">Metal-binding</keyword>
<keyword id="KW-0547">Nucleotide-binding</keyword>
<keyword id="KW-0597">Phosphoprotein</keyword>
<keyword id="KW-0630">Potassium</keyword>
<keyword id="KW-0633">Potassium transport</keyword>
<keyword id="KW-1278">Translocase</keyword>
<keyword id="KW-0812">Transmembrane</keyword>
<keyword id="KW-1133">Transmembrane helix</keyword>
<keyword id="KW-0813">Transport</keyword>
<accession>B1LLE1</accession>
<gene>
    <name evidence="1" type="primary">kdpB</name>
    <name type="ordered locus">EcSMS35_0719</name>
</gene>
<name>KDPB_ECOSM</name>
<comment type="function">
    <text evidence="1">Part of the high-affinity ATP-driven potassium transport (or Kdp) system, which catalyzes the hydrolysis of ATP coupled with the electrogenic transport of potassium into the cytoplasm. This subunit is responsible for energy coupling to the transport system and for the release of the potassium ions to the cytoplasm.</text>
</comment>
<comment type="catalytic activity">
    <reaction evidence="1">
        <text>K(+)(out) + ATP + H2O = K(+)(in) + ADP + phosphate + H(+)</text>
        <dbReference type="Rhea" id="RHEA:16777"/>
        <dbReference type="ChEBI" id="CHEBI:15377"/>
        <dbReference type="ChEBI" id="CHEBI:15378"/>
        <dbReference type="ChEBI" id="CHEBI:29103"/>
        <dbReference type="ChEBI" id="CHEBI:30616"/>
        <dbReference type="ChEBI" id="CHEBI:43474"/>
        <dbReference type="ChEBI" id="CHEBI:456216"/>
        <dbReference type="EC" id="7.2.2.6"/>
    </reaction>
    <physiologicalReaction direction="left-to-right" evidence="1">
        <dbReference type="Rhea" id="RHEA:16778"/>
    </physiologicalReaction>
</comment>
<comment type="subunit">
    <text evidence="1">The system is composed of three essential subunits: KdpA, KdpB and KdpC.</text>
</comment>
<comment type="subcellular location">
    <subcellularLocation>
        <location evidence="1">Cell inner membrane</location>
        <topology evidence="1">Multi-pass membrane protein</topology>
    </subcellularLocation>
</comment>
<comment type="similarity">
    <text evidence="1">Belongs to the cation transport ATPase (P-type) (TC 3.A.3) family. Type IA subfamily.</text>
</comment>
<feature type="chain" id="PRO_1000119412" description="Potassium-transporting ATPase ATP-binding subunit">
    <location>
        <begin position="1"/>
        <end position="682"/>
    </location>
</feature>
<feature type="transmembrane region" description="Helical" evidence="1">
    <location>
        <begin position="34"/>
        <end position="54"/>
    </location>
</feature>
<feature type="transmembrane region" description="Helical" evidence="1">
    <location>
        <begin position="62"/>
        <end position="82"/>
    </location>
</feature>
<feature type="transmembrane region" description="Helical" evidence="1">
    <location>
        <begin position="219"/>
        <end position="239"/>
    </location>
</feature>
<feature type="transmembrane region" description="Helical" evidence="1">
    <location>
        <begin position="254"/>
        <end position="274"/>
    </location>
</feature>
<feature type="transmembrane region" description="Helical" evidence="1">
    <location>
        <begin position="588"/>
        <end position="608"/>
    </location>
</feature>
<feature type="transmembrane region" description="Helical" evidence="1">
    <location>
        <begin position="616"/>
        <end position="636"/>
    </location>
</feature>
<feature type="transmembrane region" description="Helical" evidence="1">
    <location>
        <begin position="656"/>
        <end position="676"/>
    </location>
</feature>
<feature type="active site" description="4-aspartylphosphate intermediate" evidence="1">
    <location>
        <position position="307"/>
    </location>
</feature>
<feature type="binding site" evidence="1">
    <location>
        <position position="344"/>
    </location>
    <ligand>
        <name>ATP</name>
        <dbReference type="ChEBI" id="CHEBI:30616"/>
    </ligand>
</feature>
<feature type="binding site" evidence="1">
    <location>
        <position position="348"/>
    </location>
    <ligand>
        <name>ATP</name>
        <dbReference type="ChEBI" id="CHEBI:30616"/>
    </ligand>
</feature>
<feature type="binding site" evidence="1">
    <location>
        <begin position="377"/>
        <end position="384"/>
    </location>
    <ligand>
        <name>ATP</name>
        <dbReference type="ChEBI" id="CHEBI:30616"/>
    </ligand>
</feature>
<feature type="binding site" evidence="1">
    <location>
        <position position="395"/>
    </location>
    <ligand>
        <name>ATP</name>
        <dbReference type="ChEBI" id="CHEBI:30616"/>
    </ligand>
</feature>
<feature type="binding site" evidence="1">
    <location>
        <position position="518"/>
    </location>
    <ligand>
        <name>Mg(2+)</name>
        <dbReference type="ChEBI" id="CHEBI:18420"/>
    </ligand>
</feature>
<feature type="binding site" evidence="1">
    <location>
        <position position="522"/>
    </location>
    <ligand>
        <name>Mg(2+)</name>
        <dbReference type="ChEBI" id="CHEBI:18420"/>
    </ligand>
</feature>
<reference key="1">
    <citation type="journal article" date="2008" name="J. Bacteriol.">
        <title>Insights into the environmental resistance gene pool from the genome sequence of the multidrug-resistant environmental isolate Escherichia coli SMS-3-5.</title>
        <authorList>
            <person name="Fricke W.F."/>
            <person name="Wright M.S."/>
            <person name="Lindell A.H."/>
            <person name="Harkins D.M."/>
            <person name="Baker-Austin C."/>
            <person name="Ravel J."/>
            <person name="Stepanauskas R."/>
        </authorList>
    </citation>
    <scope>NUCLEOTIDE SEQUENCE [LARGE SCALE GENOMIC DNA]</scope>
    <source>
        <strain>SMS-3-5 / SECEC</strain>
    </source>
</reference>
<dbReference type="EC" id="7.2.2.6" evidence="1"/>
<dbReference type="EMBL" id="CP000970">
    <property type="protein sequence ID" value="ACB19505.1"/>
    <property type="molecule type" value="Genomic_DNA"/>
</dbReference>
<dbReference type="RefSeq" id="WP_000088008.1">
    <property type="nucleotide sequence ID" value="NC_010498.1"/>
</dbReference>
<dbReference type="BMRB" id="B1LLE1"/>
<dbReference type="SMR" id="B1LLE1"/>
<dbReference type="KEGG" id="ecm:EcSMS35_0719"/>
<dbReference type="HOGENOM" id="CLU_025728_2_0_6"/>
<dbReference type="Proteomes" id="UP000007011">
    <property type="component" value="Chromosome"/>
</dbReference>
<dbReference type="GO" id="GO:0005886">
    <property type="term" value="C:plasma membrane"/>
    <property type="evidence" value="ECO:0007669"/>
    <property type="project" value="UniProtKB-SubCell"/>
</dbReference>
<dbReference type="GO" id="GO:0005524">
    <property type="term" value="F:ATP binding"/>
    <property type="evidence" value="ECO:0007669"/>
    <property type="project" value="UniProtKB-UniRule"/>
</dbReference>
<dbReference type="GO" id="GO:0016887">
    <property type="term" value="F:ATP hydrolysis activity"/>
    <property type="evidence" value="ECO:0007669"/>
    <property type="project" value="InterPro"/>
</dbReference>
<dbReference type="GO" id="GO:0000287">
    <property type="term" value="F:magnesium ion binding"/>
    <property type="evidence" value="ECO:0007669"/>
    <property type="project" value="UniProtKB-UniRule"/>
</dbReference>
<dbReference type="GO" id="GO:0008556">
    <property type="term" value="F:P-type potassium transmembrane transporter activity"/>
    <property type="evidence" value="ECO:0007669"/>
    <property type="project" value="UniProtKB-UniRule"/>
</dbReference>
<dbReference type="CDD" id="cd02078">
    <property type="entry name" value="P-type_ATPase_K"/>
    <property type="match status" value="1"/>
</dbReference>
<dbReference type="FunFam" id="2.70.150.10:FF:000010">
    <property type="entry name" value="Potassium-transporting ATPase ATP-binding subunit"/>
    <property type="match status" value="1"/>
</dbReference>
<dbReference type="FunFam" id="3.40.1110.10:FF:000007">
    <property type="entry name" value="Potassium-transporting ATPase ATP-binding subunit"/>
    <property type="match status" value="1"/>
</dbReference>
<dbReference type="Gene3D" id="3.40.1110.10">
    <property type="entry name" value="Calcium-transporting ATPase, cytoplasmic domain N"/>
    <property type="match status" value="1"/>
</dbReference>
<dbReference type="Gene3D" id="2.70.150.10">
    <property type="entry name" value="Calcium-transporting ATPase, cytoplasmic transduction domain A"/>
    <property type="match status" value="1"/>
</dbReference>
<dbReference type="Gene3D" id="3.40.50.1000">
    <property type="entry name" value="HAD superfamily/HAD-like"/>
    <property type="match status" value="1"/>
</dbReference>
<dbReference type="HAMAP" id="MF_00285">
    <property type="entry name" value="KdpB"/>
    <property type="match status" value="1"/>
</dbReference>
<dbReference type="InterPro" id="IPR023299">
    <property type="entry name" value="ATPase_P-typ_cyto_dom_N"/>
</dbReference>
<dbReference type="InterPro" id="IPR018303">
    <property type="entry name" value="ATPase_P-typ_P_site"/>
</dbReference>
<dbReference type="InterPro" id="IPR023298">
    <property type="entry name" value="ATPase_P-typ_TM_dom_sf"/>
</dbReference>
<dbReference type="InterPro" id="IPR008250">
    <property type="entry name" value="ATPase_P-typ_transduc_dom_A_sf"/>
</dbReference>
<dbReference type="InterPro" id="IPR036412">
    <property type="entry name" value="HAD-like_sf"/>
</dbReference>
<dbReference type="InterPro" id="IPR023214">
    <property type="entry name" value="HAD_sf"/>
</dbReference>
<dbReference type="InterPro" id="IPR006391">
    <property type="entry name" value="P-type_ATPase_bsu_IA"/>
</dbReference>
<dbReference type="InterPro" id="IPR001757">
    <property type="entry name" value="P_typ_ATPase"/>
</dbReference>
<dbReference type="InterPro" id="IPR044492">
    <property type="entry name" value="P_typ_ATPase_HD_dom"/>
</dbReference>
<dbReference type="NCBIfam" id="TIGR01494">
    <property type="entry name" value="ATPase_P-type"/>
    <property type="match status" value="2"/>
</dbReference>
<dbReference type="NCBIfam" id="TIGR01497">
    <property type="entry name" value="kdpB"/>
    <property type="match status" value="1"/>
</dbReference>
<dbReference type="PANTHER" id="PTHR43743">
    <property type="entry name" value="POTASSIUM-TRANSPORTING ATPASE ATP-BINDING SUBUNIT"/>
    <property type="match status" value="1"/>
</dbReference>
<dbReference type="PANTHER" id="PTHR43743:SF1">
    <property type="entry name" value="POTASSIUM-TRANSPORTING ATPASE ATP-BINDING SUBUNIT"/>
    <property type="match status" value="1"/>
</dbReference>
<dbReference type="Pfam" id="PF00122">
    <property type="entry name" value="E1-E2_ATPase"/>
    <property type="match status" value="1"/>
</dbReference>
<dbReference type="Pfam" id="PF00702">
    <property type="entry name" value="Hydrolase"/>
    <property type="match status" value="1"/>
</dbReference>
<dbReference type="PRINTS" id="PR00119">
    <property type="entry name" value="CATATPASE"/>
</dbReference>
<dbReference type="SFLD" id="SFLDG00002">
    <property type="entry name" value="C1.7:_P-type_atpase_like"/>
    <property type="match status" value="1"/>
</dbReference>
<dbReference type="SFLD" id="SFLDF00027">
    <property type="entry name" value="p-type_atpase"/>
    <property type="match status" value="1"/>
</dbReference>
<dbReference type="SUPFAM" id="SSF81653">
    <property type="entry name" value="Calcium ATPase, transduction domain A"/>
    <property type="match status" value="1"/>
</dbReference>
<dbReference type="SUPFAM" id="SSF81665">
    <property type="entry name" value="Calcium ATPase, transmembrane domain M"/>
    <property type="match status" value="1"/>
</dbReference>
<dbReference type="SUPFAM" id="SSF56784">
    <property type="entry name" value="HAD-like"/>
    <property type="match status" value="1"/>
</dbReference>
<dbReference type="SUPFAM" id="SSF81660">
    <property type="entry name" value="Metal cation-transporting ATPase, ATP-binding domain N"/>
    <property type="match status" value="1"/>
</dbReference>
<dbReference type="PROSITE" id="PS00154">
    <property type="entry name" value="ATPASE_E1_E2"/>
    <property type="match status" value="1"/>
</dbReference>
<protein>
    <recommendedName>
        <fullName evidence="1">Potassium-transporting ATPase ATP-binding subunit</fullName>
        <ecNumber evidence="1">7.2.2.6</ecNumber>
    </recommendedName>
    <alternativeName>
        <fullName evidence="1">ATP phosphohydrolase [potassium-transporting] B chain</fullName>
    </alternativeName>
    <alternativeName>
        <fullName evidence="1">Potassium-binding and translocating subunit B</fullName>
    </alternativeName>
    <alternativeName>
        <fullName evidence="1">Potassium-translocating ATPase B chain</fullName>
    </alternativeName>
</protein>